<comment type="subcellular location">
    <subcellularLocation>
        <location evidence="3">Cell membrane</location>
        <topology evidence="3">Multi-pass membrane protein</topology>
    </subcellularLocation>
</comment>
<comment type="similarity">
    <text evidence="3">To M.tuberculosis Rv0876c.</text>
</comment>
<evidence type="ECO:0000255" key="1"/>
<evidence type="ECO:0000256" key="2">
    <source>
        <dbReference type="SAM" id="MobiDB-lite"/>
    </source>
</evidence>
<evidence type="ECO:0000305" key="3"/>
<organism>
    <name type="scientific">Mycobacterium leprae (strain TN)</name>
    <dbReference type="NCBI Taxonomy" id="272631"/>
    <lineage>
        <taxon>Bacteria</taxon>
        <taxon>Bacillati</taxon>
        <taxon>Actinomycetota</taxon>
        <taxon>Actinomycetes</taxon>
        <taxon>Mycobacteriales</taxon>
        <taxon>Mycobacteriaceae</taxon>
        <taxon>Mycobacterium</taxon>
    </lineage>
</organism>
<protein>
    <recommendedName>
        <fullName>Uncharacterized protein ML2143</fullName>
    </recommendedName>
</protein>
<name>Y2143_MYCLE</name>
<feature type="chain" id="PRO_0000103720" description="Uncharacterized protein ML2143">
    <location>
        <begin position="1"/>
        <end position="579"/>
    </location>
</feature>
<feature type="transmembrane region" description="Helical" evidence="1">
    <location>
        <begin position="148"/>
        <end position="168"/>
    </location>
</feature>
<feature type="transmembrane region" description="Helical" evidence="1">
    <location>
        <begin position="175"/>
        <end position="195"/>
    </location>
</feature>
<feature type="transmembrane region" description="Helical" evidence="1">
    <location>
        <begin position="206"/>
        <end position="226"/>
    </location>
</feature>
<feature type="transmembrane region" description="Helical" evidence="1">
    <location>
        <begin position="228"/>
        <end position="248"/>
    </location>
</feature>
<feature type="transmembrane region" description="Helical" evidence="1">
    <location>
        <begin position="279"/>
        <end position="299"/>
    </location>
</feature>
<feature type="transmembrane region" description="Helical" evidence="1">
    <location>
        <begin position="303"/>
        <end position="323"/>
    </location>
</feature>
<feature type="transmembrane region" description="Helical" evidence="1">
    <location>
        <begin position="378"/>
        <end position="398"/>
    </location>
</feature>
<feature type="transmembrane region" description="Helical" evidence="1">
    <location>
        <begin position="407"/>
        <end position="427"/>
    </location>
</feature>
<feature type="transmembrane region" description="Helical" evidence="1">
    <location>
        <begin position="448"/>
        <end position="468"/>
    </location>
</feature>
<feature type="transmembrane region" description="Helical" evidence="1">
    <location>
        <begin position="504"/>
        <end position="524"/>
    </location>
</feature>
<feature type="transmembrane region" description="Helical" evidence="1">
    <location>
        <begin position="526"/>
        <end position="546"/>
    </location>
</feature>
<feature type="region of interest" description="Disordered" evidence="2">
    <location>
        <begin position="1"/>
        <end position="100"/>
    </location>
</feature>
<feature type="compositionally biased region" description="Polar residues" evidence="2">
    <location>
        <begin position="80"/>
        <end position="90"/>
    </location>
</feature>
<keyword id="KW-1003">Cell membrane</keyword>
<keyword id="KW-0472">Membrane</keyword>
<keyword id="KW-1185">Reference proteome</keyword>
<keyword id="KW-0812">Transmembrane</keyword>
<keyword id="KW-1133">Transmembrane helix</keyword>
<reference key="1">
    <citation type="journal article" date="2001" name="Nature">
        <title>Massive gene decay in the leprosy bacillus.</title>
        <authorList>
            <person name="Cole S.T."/>
            <person name="Eiglmeier K."/>
            <person name="Parkhill J."/>
            <person name="James K.D."/>
            <person name="Thomson N.R."/>
            <person name="Wheeler P.R."/>
            <person name="Honore N."/>
            <person name="Garnier T."/>
            <person name="Churcher C.M."/>
            <person name="Harris D.E."/>
            <person name="Mungall K.L."/>
            <person name="Basham D."/>
            <person name="Brown D."/>
            <person name="Chillingworth T."/>
            <person name="Connor R."/>
            <person name="Davies R.M."/>
            <person name="Devlin K."/>
            <person name="Duthoy S."/>
            <person name="Feltwell T."/>
            <person name="Fraser A."/>
            <person name="Hamlin N."/>
            <person name="Holroyd S."/>
            <person name="Hornsby T."/>
            <person name="Jagels K."/>
            <person name="Lacroix C."/>
            <person name="Maclean J."/>
            <person name="Moule S."/>
            <person name="Murphy L.D."/>
            <person name="Oliver K."/>
            <person name="Quail M.A."/>
            <person name="Rajandream M.A."/>
            <person name="Rutherford K.M."/>
            <person name="Rutter S."/>
            <person name="Seeger K."/>
            <person name="Simon S."/>
            <person name="Simmonds M."/>
            <person name="Skelton J."/>
            <person name="Squares R."/>
            <person name="Squares S."/>
            <person name="Stevens K."/>
            <person name="Taylor K."/>
            <person name="Whitehead S."/>
            <person name="Woodward J.R."/>
            <person name="Barrell B.G."/>
        </authorList>
    </citation>
    <scope>NUCLEOTIDE SEQUENCE [LARGE SCALE GENOMIC DNA]</scope>
    <source>
        <strain>TN</strain>
    </source>
</reference>
<proteinExistence type="predicted"/>
<dbReference type="EMBL" id="Z99494">
    <property type="protein sequence ID" value="CAB16668.1"/>
    <property type="molecule type" value="Genomic_DNA"/>
</dbReference>
<dbReference type="EMBL" id="AL583924">
    <property type="protein sequence ID" value="CAC31098.1"/>
    <property type="molecule type" value="Genomic_DNA"/>
</dbReference>
<dbReference type="PIR" id="T45344">
    <property type="entry name" value="T45344"/>
</dbReference>
<dbReference type="RefSeq" id="NP_302414.1">
    <property type="nucleotide sequence ID" value="NC_002677.1"/>
</dbReference>
<dbReference type="RefSeq" id="WP_010908734.1">
    <property type="nucleotide sequence ID" value="NC_002677.1"/>
</dbReference>
<dbReference type="STRING" id="272631.gene:17575996"/>
<dbReference type="KEGG" id="mle:ML2143"/>
<dbReference type="PATRIC" id="fig|272631.5.peg.4047"/>
<dbReference type="Leproma" id="ML2143"/>
<dbReference type="eggNOG" id="COG2814">
    <property type="taxonomic scope" value="Bacteria"/>
</dbReference>
<dbReference type="HOGENOM" id="CLU_025436_0_0_11"/>
<dbReference type="OrthoDB" id="5170137at2"/>
<dbReference type="Proteomes" id="UP000000806">
    <property type="component" value="Chromosome"/>
</dbReference>
<dbReference type="GO" id="GO:0005886">
    <property type="term" value="C:plasma membrane"/>
    <property type="evidence" value="ECO:0007669"/>
    <property type="project" value="UniProtKB-SubCell"/>
</dbReference>
<dbReference type="GO" id="GO:0022857">
    <property type="term" value="F:transmembrane transporter activity"/>
    <property type="evidence" value="ECO:0007669"/>
    <property type="project" value="InterPro"/>
</dbReference>
<dbReference type="CDD" id="cd06173">
    <property type="entry name" value="MFS_MefA_like"/>
    <property type="match status" value="1"/>
</dbReference>
<dbReference type="Gene3D" id="1.20.1250.20">
    <property type="entry name" value="MFS general substrate transporter like domains"/>
    <property type="match status" value="1"/>
</dbReference>
<dbReference type="InterPro" id="IPR011701">
    <property type="entry name" value="MFS"/>
</dbReference>
<dbReference type="InterPro" id="IPR036259">
    <property type="entry name" value="MFS_trans_sf"/>
</dbReference>
<dbReference type="PANTHER" id="PTHR23513">
    <property type="entry name" value="INTEGRAL MEMBRANE EFFLUX PROTEIN-RELATED"/>
    <property type="match status" value="1"/>
</dbReference>
<dbReference type="PANTHER" id="PTHR23513:SF18">
    <property type="entry name" value="INTEGRAL MEMBRANE PROTEIN"/>
    <property type="match status" value="1"/>
</dbReference>
<dbReference type="Pfam" id="PF07690">
    <property type="entry name" value="MFS_1"/>
    <property type="match status" value="1"/>
</dbReference>
<dbReference type="SUPFAM" id="SSF103473">
    <property type="entry name" value="MFS general substrate transporter"/>
    <property type="match status" value="1"/>
</dbReference>
<gene>
    <name type="ordered locus">ML2143</name>
    <name type="ORF">MLCB57.28c</name>
</gene>
<sequence>MSGRRRNHPGRLASIPGLRTRTGSRNQHPGIANYPADSSDFRPAQQRRALEQREQQAGQLDPARRSPSMPSANRYLPPLGQQQSEPQHNSAPPCGPYPGERIKVTRAAAQRSREMGYRMYWMVQRAATADGADKSGLTALTWPVVTNFAVDSAMAVALANTLFFAAASGESKSKVALYLLITIAPFAVIAPLIGPALDRLQHGRRVALATSFVLRTGLATLLIMNYDGATGSYPSMVLYPCALAMMVLSKSFSVLRSAVTPRVMPPSIDLVRVNSRLTVFGLLGGTIAGGAIAAGVEFVCAHLFKLPGALFVVAAITISGALLSMRIPRWVEVTAGEIPATLSYRLHRKPLRQSWPEEVKKVSGRLRQPLGRNIITSLWGNCTIKVMVGFLFLYPAFVAKEHQANGWVQLGMLGLIGTAAAIGNFAGNFTSARLQLGRPAVLVVRCTIAVTVLALAASVAGNLLMTTIATLITSGSSAIAKASLDASLQNDLPEESRASGFGRSESTLQLAWVLGGALGVMVYTDLWVGFTAVSALLILGLAQTVVSFRGDSLIPGLGGNRPVMIEQESMRRAAAVSPQ</sequence>
<accession>O33057</accession>